<accession>B0K3H9</accession>
<reference key="1">
    <citation type="submission" date="2008-01" db="EMBL/GenBank/DDBJ databases">
        <title>Complete sequence of Thermoanaerobacter sp. X514.</title>
        <authorList>
            <consortium name="US DOE Joint Genome Institute"/>
            <person name="Copeland A."/>
            <person name="Lucas S."/>
            <person name="Lapidus A."/>
            <person name="Barry K."/>
            <person name="Glavina del Rio T."/>
            <person name="Dalin E."/>
            <person name="Tice H."/>
            <person name="Pitluck S."/>
            <person name="Bruce D."/>
            <person name="Goodwin L."/>
            <person name="Saunders E."/>
            <person name="Brettin T."/>
            <person name="Detter J.C."/>
            <person name="Han C."/>
            <person name="Schmutz J."/>
            <person name="Larimer F."/>
            <person name="Land M."/>
            <person name="Hauser L."/>
            <person name="Kyrpides N."/>
            <person name="Kim E."/>
            <person name="Hemme C."/>
            <person name="Fields M.W."/>
            <person name="He Z."/>
            <person name="Zhou J."/>
            <person name="Richardson P."/>
        </authorList>
    </citation>
    <scope>NUCLEOTIDE SEQUENCE [LARGE SCALE GENOMIC DNA]</scope>
    <source>
        <strain>X514</strain>
    </source>
</reference>
<feature type="chain" id="PRO_1000191339" description="Transcriptional regulator MraZ">
    <location>
        <begin position="1"/>
        <end position="143"/>
    </location>
</feature>
<feature type="domain" description="SpoVT-AbrB 1" evidence="2">
    <location>
        <begin position="5"/>
        <end position="47"/>
    </location>
</feature>
<feature type="domain" description="SpoVT-AbrB 2" evidence="2">
    <location>
        <begin position="76"/>
        <end position="119"/>
    </location>
</feature>
<dbReference type="EMBL" id="CP000923">
    <property type="protein sequence ID" value="ABY93290.1"/>
    <property type="molecule type" value="Genomic_DNA"/>
</dbReference>
<dbReference type="RefSeq" id="WP_009052553.1">
    <property type="nucleotide sequence ID" value="NC_010320.1"/>
</dbReference>
<dbReference type="SMR" id="B0K3H9"/>
<dbReference type="KEGG" id="tex:Teth514_2018"/>
<dbReference type="HOGENOM" id="CLU_107907_0_5_9"/>
<dbReference type="Proteomes" id="UP000002155">
    <property type="component" value="Chromosome"/>
</dbReference>
<dbReference type="GO" id="GO:0005737">
    <property type="term" value="C:cytoplasm"/>
    <property type="evidence" value="ECO:0007669"/>
    <property type="project" value="UniProtKB-UniRule"/>
</dbReference>
<dbReference type="GO" id="GO:0009295">
    <property type="term" value="C:nucleoid"/>
    <property type="evidence" value="ECO:0007669"/>
    <property type="project" value="UniProtKB-SubCell"/>
</dbReference>
<dbReference type="GO" id="GO:0003700">
    <property type="term" value="F:DNA-binding transcription factor activity"/>
    <property type="evidence" value="ECO:0007669"/>
    <property type="project" value="UniProtKB-UniRule"/>
</dbReference>
<dbReference type="GO" id="GO:0000976">
    <property type="term" value="F:transcription cis-regulatory region binding"/>
    <property type="evidence" value="ECO:0007669"/>
    <property type="project" value="TreeGrafter"/>
</dbReference>
<dbReference type="GO" id="GO:2000143">
    <property type="term" value="P:negative regulation of DNA-templated transcription initiation"/>
    <property type="evidence" value="ECO:0007669"/>
    <property type="project" value="TreeGrafter"/>
</dbReference>
<dbReference type="CDD" id="cd16321">
    <property type="entry name" value="MraZ_C"/>
    <property type="match status" value="1"/>
</dbReference>
<dbReference type="CDD" id="cd16320">
    <property type="entry name" value="MraZ_N"/>
    <property type="match status" value="1"/>
</dbReference>
<dbReference type="FunFam" id="3.40.1550.20:FF:000002">
    <property type="entry name" value="Transcriptional regulator MraZ"/>
    <property type="match status" value="1"/>
</dbReference>
<dbReference type="Gene3D" id="3.40.1550.20">
    <property type="entry name" value="Transcriptional regulator MraZ domain"/>
    <property type="match status" value="1"/>
</dbReference>
<dbReference type="HAMAP" id="MF_01008">
    <property type="entry name" value="MraZ"/>
    <property type="match status" value="1"/>
</dbReference>
<dbReference type="InterPro" id="IPR003444">
    <property type="entry name" value="MraZ"/>
</dbReference>
<dbReference type="InterPro" id="IPR035644">
    <property type="entry name" value="MraZ_C"/>
</dbReference>
<dbReference type="InterPro" id="IPR020603">
    <property type="entry name" value="MraZ_dom"/>
</dbReference>
<dbReference type="InterPro" id="IPR035642">
    <property type="entry name" value="MraZ_N"/>
</dbReference>
<dbReference type="InterPro" id="IPR038619">
    <property type="entry name" value="MraZ_sf"/>
</dbReference>
<dbReference type="InterPro" id="IPR007159">
    <property type="entry name" value="SpoVT-AbrB_dom"/>
</dbReference>
<dbReference type="InterPro" id="IPR037914">
    <property type="entry name" value="SpoVT-AbrB_sf"/>
</dbReference>
<dbReference type="NCBIfam" id="TIGR00242">
    <property type="entry name" value="division/cell wall cluster transcriptional repressor MraZ"/>
    <property type="match status" value="1"/>
</dbReference>
<dbReference type="PANTHER" id="PTHR34701">
    <property type="entry name" value="TRANSCRIPTIONAL REGULATOR MRAZ"/>
    <property type="match status" value="1"/>
</dbReference>
<dbReference type="PANTHER" id="PTHR34701:SF1">
    <property type="entry name" value="TRANSCRIPTIONAL REGULATOR MRAZ"/>
    <property type="match status" value="1"/>
</dbReference>
<dbReference type="Pfam" id="PF02381">
    <property type="entry name" value="MraZ"/>
    <property type="match status" value="2"/>
</dbReference>
<dbReference type="SUPFAM" id="SSF89447">
    <property type="entry name" value="AbrB/MazE/MraZ-like"/>
    <property type="match status" value="1"/>
</dbReference>
<dbReference type="PROSITE" id="PS51740">
    <property type="entry name" value="SPOVT_ABRB"/>
    <property type="match status" value="2"/>
</dbReference>
<protein>
    <recommendedName>
        <fullName>Transcriptional regulator MraZ</fullName>
    </recommendedName>
</protein>
<organism>
    <name type="scientific">Thermoanaerobacter sp. (strain X514)</name>
    <dbReference type="NCBI Taxonomy" id="399726"/>
    <lineage>
        <taxon>Bacteria</taxon>
        <taxon>Bacillati</taxon>
        <taxon>Bacillota</taxon>
        <taxon>Clostridia</taxon>
        <taxon>Thermoanaerobacterales</taxon>
        <taxon>Thermoanaerobacteraceae</taxon>
        <taxon>Thermoanaerobacter</taxon>
    </lineage>
</organism>
<name>MRAZ_THEPX</name>
<keyword id="KW-0963">Cytoplasm</keyword>
<keyword id="KW-0238">DNA-binding</keyword>
<keyword id="KW-0677">Repeat</keyword>
<keyword id="KW-0804">Transcription</keyword>
<keyword id="KW-0805">Transcription regulation</keyword>
<evidence type="ECO:0000255" key="1">
    <source>
        <dbReference type="HAMAP-Rule" id="MF_01008"/>
    </source>
</evidence>
<evidence type="ECO:0000255" key="2">
    <source>
        <dbReference type="PROSITE-ProRule" id="PRU01076"/>
    </source>
</evidence>
<proteinExistence type="inferred from homology"/>
<sequence>MLMGQYEHTIDAKGRVIIPAKFREELGEKFVLTKGLDNCLFVYSLEEWKNIEAKLKTLPLTKKDARAFTRFFLAGAVECEIDKQGRILIPANLREHAKIEKDVIFIGVSTRVEIWSKEVWEEYSNNTDVSFEEIAEHLDDLNI</sequence>
<comment type="subunit">
    <text evidence="1">Forms oligomers.</text>
</comment>
<comment type="subcellular location">
    <subcellularLocation>
        <location evidence="1">Cytoplasm</location>
        <location evidence="1">Nucleoid</location>
    </subcellularLocation>
</comment>
<comment type="similarity">
    <text evidence="1">Belongs to the MraZ family.</text>
</comment>
<gene>
    <name evidence="1" type="primary">mraZ</name>
    <name type="ordered locus">Teth514_2018</name>
</gene>